<protein>
    <recommendedName>
        <fullName evidence="1">Small ribosomal subunit protein uS10</fullName>
    </recommendedName>
    <alternativeName>
        <fullName evidence="2">30S ribosomal protein S10</fullName>
    </alternativeName>
</protein>
<sequence length="102" mass="11627">MKNQKIRIRLKAFDHQMLDQSATKIVDTAKRTGAQVAGPVPLPTEKSIYTILRSPHVNKDSREQFEMRVHKRLIDILEPTPKTVDALMRLDLPAGVDIEIKL</sequence>
<dbReference type="EMBL" id="CP000612">
    <property type="protein sequence ID" value="ABO48763.1"/>
    <property type="molecule type" value="Genomic_DNA"/>
</dbReference>
<dbReference type="RefSeq" id="WP_011876603.1">
    <property type="nucleotide sequence ID" value="NC_009253.1"/>
</dbReference>
<dbReference type="SMR" id="A4J110"/>
<dbReference type="STRING" id="349161.Dred_0214"/>
<dbReference type="KEGG" id="drm:Dred_0214"/>
<dbReference type="eggNOG" id="COG0051">
    <property type="taxonomic scope" value="Bacteria"/>
</dbReference>
<dbReference type="HOGENOM" id="CLU_122625_1_3_9"/>
<dbReference type="OrthoDB" id="9804464at2"/>
<dbReference type="Proteomes" id="UP000001556">
    <property type="component" value="Chromosome"/>
</dbReference>
<dbReference type="GO" id="GO:1990904">
    <property type="term" value="C:ribonucleoprotein complex"/>
    <property type="evidence" value="ECO:0007669"/>
    <property type="project" value="UniProtKB-KW"/>
</dbReference>
<dbReference type="GO" id="GO:0005840">
    <property type="term" value="C:ribosome"/>
    <property type="evidence" value="ECO:0007669"/>
    <property type="project" value="UniProtKB-KW"/>
</dbReference>
<dbReference type="GO" id="GO:0003735">
    <property type="term" value="F:structural constituent of ribosome"/>
    <property type="evidence" value="ECO:0007669"/>
    <property type="project" value="InterPro"/>
</dbReference>
<dbReference type="GO" id="GO:0000049">
    <property type="term" value="F:tRNA binding"/>
    <property type="evidence" value="ECO:0007669"/>
    <property type="project" value="UniProtKB-UniRule"/>
</dbReference>
<dbReference type="GO" id="GO:0006412">
    <property type="term" value="P:translation"/>
    <property type="evidence" value="ECO:0007669"/>
    <property type="project" value="UniProtKB-UniRule"/>
</dbReference>
<dbReference type="FunFam" id="3.30.70.600:FF:000001">
    <property type="entry name" value="30S ribosomal protein S10"/>
    <property type="match status" value="1"/>
</dbReference>
<dbReference type="Gene3D" id="3.30.70.600">
    <property type="entry name" value="Ribosomal protein S10 domain"/>
    <property type="match status" value="1"/>
</dbReference>
<dbReference type="HAMAP" id="MF_00508">
    <property type="entry name" value="Ribosomal_uS10"/>
    <property type="match status" value="1"/>
</dbReference>
<dbReference type="InterPro" id="IPR001848">
    <property type="entry name" value="Ribosomal_uS10"/>
</dbReference>
<dbReference type="InterPro" id="IPR018268">
    <property type="entry name" value="Ribosomal_uS10_CS"/>
</dbReference>
<dbReference type="InterPro" id="IPR027486">
    <property type="entry name" value="Ribosomal_uS10_dom"/>
</dbReference>
<dbReference type="InterPro" id="IPR036838">
    <property type="entry name" value="Ribosomal_uS10_dom_sf"/>
</dbReference>
<dbReference type="NCBIfam" id="NF001861">
    <property type="entry name" value="PRK00596.1"/>
    <property type="match status" value="1"/>
</dbReference>
<dbReference type="NCBIfam" id="TIGR01049">
    <property type="entry name" value="rpsJ_bact"/>
    <property type="match status" value="1"/>
</dbReference>
<dbReference type="PANTHER" id="PTHR11700">
    <property type="entry name" value="30S RIBOSOMAL PROTEIN S10 FAMILY MEMBER"/>
    <property type="match status" value="1"/>
</dbReference>
<dbReference type="Pfam" id="PF00338">
    <property type="entry name" value="Ribosomal_S10"/>
    <property type="match status" value="1"/>
</dbReference>
<dbReference type="PRINTS" id="PR00971">
    <property type="entry name" value="RIBOSOMALS10"/>
</dbReference>
<dbReference type="SMART" id="SM01403">
    <property type="entry name" value="Ribosomal_S10"/>
    <property type="match status" value="1"/>
</dbReference>
<dbReference type="SUPFAM" id="SSF54999">
    <property type="entry name" value="Ribosomal protein S10"/>
    <property type="match status" value="1"/>
</dbReference>
<dbReference type="PROSITE" id="PS00361">
    <property type="entry name" value="RIBOSOMAL_S10"/>
    <property type="match status" value="1"/>
</dbReference>
<keyword id="KW-1185">Reference proteome</keyword>
<keyword id="KW-0687">Ribonucleoprotein</keyword>
<keyword id="KW-0689">Ribosomal protein</keyword>
<comment type="function">
    <text evidence="1">Involved in the binding of tRNA to the ribosomes.</text>
</comment>
<comment type="subunit">
    <text evidence="1">Part of the 30S ribosomal subunit.</text>
</comment>
<comment type="similarity">
    <text evidence="1">Belongs to the universal ribosomal protein uS10 family.</text>
</comment>
<gene>
    <name evidence="1" type="primary">rpsJ</name>
    <name type="ordered locus">Dred_0214</name>
</gene>
<proteinExistence type="inferred from homology"/>
<reference key="1">
    <citation type="submission" date="2007-03" db="EMBL/GenBank/DDBJ databases">
        <title>Complete sequence of Desulfotomaculum reducens MI-1.</title>
        <authorList>
            <consortium name="US DOE Joint Genome Institute"/>
            <person name="Copeland A."/>
            <person name="Lucas S."/>
            <person name="Lapidus A."/>
            <person name="Barry K."/>
            <person name="Detter J.C."/>
            <person name="Glavina del Rio T."/>
            <person name="Hammon N."/>
            <person name="Israni S."/>
            <person name="Dalin E."/>
            <person name="Tice H."/>
            <person name="Pitluck S."/>
            <person name="Sims D."/>
            <person name="Brettin T."/>
            <person name="Bruce D."/>
            <person name="Han C."/>
            <person name="Tapia R."/>
            <person name="Schmutz J."/>
            <person name="Larimer F."/>
            <person name="Land M."/>
            <person name="Hauser L."/>
            <person name="Kyrpides N."/>
            <person name="Kim E."/>
            <person name="Tebo B.M."/>
            <person name="Richardson P."/>
        </authorList>
    </citation>
    <scope>NUCLEOTIDE SEQUENCE [LARGE SCALE GENOMIC DNA]</scope>
    <source>
        <strain>ATCC BAA-1160 / DSM 100696 / MI-1</strain>
    </source>
</reference>
<feature type="chain" id="PRO_1000072461" description="Small ribosomal subunit protein uS10">
    <location>
        <begin position="1"/>
        <end position="102"/>
    </location>
</feature>
<name>RS10_DESRM</name>
<evidence type="ECO:0000255" key="1">
    <source>
        <dbReference type="HAMAP-Rule" id="MF_00508"/>
    </source>
</evidence>
<evidence type="ECO:0000305" key="2"/>
<accession>A4J110</accession>
<organism>
    <name type="scientific">Desulforamulus reducens (strain ATCC BAA-1160 / DSM 100696 / MI-1)</name>
    <name type="common">Desulfotomaculum reducens</name>
    <dbReference type="NCBI Taxonomy" id="349161"/>
    <lineage>
        <taxon>Bacteria</taxon>
        <taxon>Bacillati</taxon>
        <taxon>Bacillota</taxon>
        <taxon>Clostridia</taxon>
        <taxon>Eubacteriales</taxon>
        <taxon>Peptococcaceae</taxon>
        <taxon>Desulforamulus</taxon>
    </lineage>
</organism>